<proteinExistence type="inferred from homology"/>
<gene>
    <name evidence="1" type="primary">cdd</name>
    <name type="ordered locus">Ssed_2618</name>
</gene>
<keyword id="KW-0378">Hydrolase</keyword>
<keyword id="KW-0479">Metal-binding</keyword>
<keyword id="KW-1185">Reference proteome</keyword>
<keyword id="KW-0862">Zinc</keyword>
<feature type="chain" id="PRO_1000087800" description="Cytidine deaminase">
    <location>
        <begin position="1"/>
        <end position="296"/>
    </location>
</feature>
<feature type="domain" description="CMP/dCMP-type deaminase 1" evidence="2">
    <location>
        <begin position="47"/>
        <end position="167"/>
    </location>
</feature>
<feature type="domain" description="CMP/dCMP-type deaminase 2" evidence="2">
    <location>
        <begin position="186"/>
        <end position="296"/>
    </location>
</feature>
<feature type="active site" description="Proton donor" evidence="1">
    <location>
        <position position="103"/>
    </location>
</feature>
<feature type="binding site" evidence="1">
    <location>
        <begin position="88"/>
        <end position="90"/>
    </location>
    <ligand>
        <name>substrate</name>
    </ligand>
</feature>
<feature type="binding site" evidence="1">
    <location>
        <position position="101"/>
    </location>
    <ligand>
        <name>Zn(2+)</name>
        <dbReference type="ChEBI" id="CHEBI:29105"/>
        <note>catalytic</note>
    </ligand>
</feature>
<feature type="binding site" evidence="1">
    <location>
        <position position="128"/>
    </location>
    <ligand>
        <name>Zn(2+)</name>
        <dbReference type="ChEBI" id="CHEBI:29105"/>
        <note>catalytic</note>
    </ligand>
</feature>
<feature type="binding site" evidence="1">
    <location>
        <position position="131"/>
    </location>
    <ligand>
        <name>Zn(2+)</name>
        <dbReference type="ChEBI" id="CHEBI:29105"/>
        <note>catalytic</note>
    </ligand>
</feature>
<accession>A8FWK2</accession>
<evidence type="ECO:0000255" key="1">
    <source>
        <dbReference type="HAMAP-Rule" id="MF_01558"/>
    </source>
</evidence>
<evidence type="ECO:0000255" key="2">
    <source>
        <dbReference type="PROSITE-ProRule" id="PRU01083"/>
    </source>
</evidence>
<name>CDD_SHESH</name>
<comment type="function">
    <text evidence="1">This enzyme scavenges exogenous and endogenous cytidine and 2'-deoxycytidine for UMP synthesis.</text>
</comment>
<comment type="catalytic activity">
    <reaction evidence="1">
        <text>cytidine + H2O + H(+) = uridine + NH4(+)</text>
        <dbReference type="Rhea" id="RHEA:16069"/>
        <dbReference type="ChEBI" id="CHEBI:15377"/>
        <dbReference type="ChEBI" id="CHEBI:15378"/>
        <dbReference type="ChEBI" id="CHEBI:16704"/>
        <dbReference type="ChEBI" id="CHEBI:17562"/>
        <dbReference type="ChEBI" id="CHEBI:28938"/>
        <dbReference type="EC" id="3.5.4.5"/>
    </reaction>
</comment>
<comment type="catalytic activity">
    <reaction evidence="1">
        <text>2'-deoxycytidine + H2O + H(+) = 2'-deoxyuridine + NH4(+)</text>
        <dbReference type="Rhea" id="RHEA:13433"/>
        <dbReference type="ChEBI" id="CHEBI:15377"/>
        <dbReference type="ChEBI" id="CHEBI:15378"/>
        <dbReference type="ChEBI" id="CHEBI:15698"/>
        <dbReference type="ChEBI" id="CHEBI:16450"/>
        <dbReference type="ChEBI" id="CHEBI:28938"/>
        <dbReference type="EC" id="3.5.4.5"/>
    </reaction>
</comment>
<comment type="cofactor">
    <cofactor evidence="1">
        <name>Zn(2+)</name>
        <dbReference type="ChEBI" id="CHEBI:29105"/>
    </cofactor>
    <text evidence="1">Binds 1 zinc ion.</text>
</comment>
<comment type="subunit">
    <text evidence="1">Homodimer.</text>
</comment>
<comment type="similarity">
    <text evidence="1">Belongs to the cytidine and deoxycytidylate deaminase family.</text>
</comment>
<protein>
    <recommendedName>
        <fullName evidence="1">Cytidine deaminase</fullName>
        <ecNumber evidence="1">3.5.4.5</ecNumber>
    </recommendedName>
    <alternativeName>
        <fullName evidence="1">Cytidine aminohydrolase</fullName>
        <shortName evidence="1">CDA</shortName>
    </alternativeName>
</protein>
<dbReference type="EC" id="3.5.4.5" evidence="1"/>
<dbReference type="EMBL" id="CP000821">
    <property type="protein sequence ID" value="ABV37225.1"/>
    <property type="molecule type" value="Genomic_DNA"/>
</dbReference>
<dbReference type="RefSeq" id="WP_012142957.1">
    <property type="nucleotide sequence ID" value="NC_009831.1"/>
</dbReference>
<dbReference type="SMR" id="A8FWK2"/>
<dbReference type="STRING" id="425104.Ssed_2618"/>
<dbReference type="KEGG" id="sse:Ssed_2618"/>
<dbReference type="eggNOG" id="COG0295">
    <property type="taxonomic scope" value="Bacteria"/>
</dbReference>
<dbReference type="HOGENOM" id="CLU_052424_0_0_6"/>
<dbReference type="OrthoDB" id="9795347at2"/>
<dbReference type="Proteomes" id="UP000002015">
    <property type="component" value="Chromosome"/>
</dbReference>
<dbReference type="GO" id="GO:0005829">
    <property type="term" value="C:cytosol"/>
    <property type="evidence" value="ECO:0007669"/>
    <property type="project" value="TreeGrafter"/>
</dbReference>
<dbReference type="GO" id="GO:0004126">
    <property type="term" value="F:cytidine deaminase activity"/>
    <property type="evidence" value="ECO:0007669"/>
    <property type="project" value="UniProtKB-UniRule"/>
</dbReference>
<dbReference type="GO" id="GO:0042802">
    <property type="term" value="F:identical protein binding"/>
    <property type="evidence" value="ECO:0007669"/>
    <property type="project" value="UniProtKB-ARBA"/>
</dbReference>
<dbReference type="GO" id="GO:0008270">
    <property type="term" value="F:zinc ion binding"/>
    <property type="evidence" value="ECO:0007669"/>
    <property type="project" value="UniProtKB-UniRule"/>
</dbReference>
<dbReference type="GO" id="GO:0009972">
    <property type="term" value="P:cytidine deamination"/>
    <property type="evidence" value="ECO:0007669"/>
    <property type="project" value="InterPro"/>
</dbReference>
<dbReference type="CDD" id="cd01283">
    <property type="entry name" value="cytidine_deaminase"/>
    <property type="match status" value="1"/>
</dbReference>
<dbReference type="FunFam" id="3.40.140.10:FF:000007">
    <property type="entry name" value="Cytidine deaminase"/>
    <property type="match status" value="1"/>
</dbReference>
<dbReference type="Gene3D" id="3.40.140.10">
    <property type="entry name" value="Cytidine Deaminase, domain 2"/>
    <property type="match status" value="2"/>
</dbReference>
<dbReference type="HAMAP" id="MF_01558">
    <property type="entry name" value="Cyt_deam"/>
    <property type="match status" value="1"/>
</dbReference>
<dbReference type="InterPro" id="IPR016192">
    <property type="entry name" value="APOBEC/CMP_deaminase_Zn-bd"/>
</dbReference>
<dbReference type="InterPro" id="IPR002125">
    <property type="entry name" value="CMP_dCMP_dom"/>
</dbReference>
<dbReference type="InterPro" id="IPR013171">
    <property type="entry name" value="Cyd/dCyd_deaminase_Zn-bd"/>
</dbReference>
<dbReference type="InterPro" id="IPR050202">
    <property type="entry name" value="Cyt/Deoxycyt_deaminase"/>
</dbReference>
<dbReference type="InterPro" id="IPR016193">
    <property type="entry name" value="Cytidine_deaminase-like"/>
</dbReference>
<dbReference type="InterPro" id="IPR020797">
    <property type="entry name" value="Cytidine_deaminase_bacteria"/>
</dbReference>
<dbReference type="NCBIfam" id="NF006537">
    <property type="entry name" value="PRK09027.1"/>
    <property type="match status" value="1"/>
</dbReference>
<dbReference type="PANTHER" id="PTHR11644">
    <property type="entry name" value="CYTIDINE DEAMINASE"/>
    <property type="match status" value="1"/>
</dbReference>
<dbReference type="PANTHER" id="PTHR11644:SF2">
    <property type="entry name" value="CYTIDINE DEAMINASE"/>
    <property type="match status" value="1"/>
</dbReference>
<dbReference type="Pfam" id="PF00383">
    <property type="entry name" value="dCMP_cyt_deam_1"/>
    <property type="match status" value="1"/>
</dbReference>
<dbReference type="Pfam" id="PF08211">
    <property type="entry name" value="dCMP_cyt_deam_2"/>
    <property type="match status" value="1"/>
</dbReference>
<dbReference type="PIRSF" id="PIRSF006334">
    <property type="entry name" value="Cdd_plus_pseudo"/>
    <property type="match status" value="1"/>
</dbReference>
<dbReference type="SUPFAM" id="SSF53927">
    <property type="entry name" value="Cytidine deaminase-like"/>
    <property type="match status" value="2"/>
</dbReference>
<dbReference type="PROSITE" id="PS00903">
    <property type="entry name" value="CYT_DCMP_DEAMINASES_1"/>
    <property type="match status" value="1"/>
</dbReference>
<dbReference type="PROSITE" id="PS51747">
    <property type="entry name" value="CYT_DCMP_DEAMINASES_2"/>
    <property type="match status" value="2"/>
</dbReference>
<organism>
    <name type="scientific">Shewanella sediminis (strain HAW-EB3)</name>
    <dbReference type="NCBI Taxonomy" id="425104"/>
    <lineage>
        <taxon>Bacteria</taxon>
        <taxon>Pseudomonadati</taxon>
        <taxon>Pseudomonadota</taxon>
        <taxon>Gammaproteobacteria</taxon>
        <taxon>Alteromonadales</taxon>
        <taxon>Shewanellaceae</taxon>
        <taxon>Shewanella</taxon>
    </lineage>
</organism>
<reference key="1">
    <citation type="submission" date="2007-08" db="EMBL/GenBank/DDBJ databases">
        <title>Complete sequence of Shewanella sediminis HAW-EB3.</title>
        <authorList>
            <consortium name="US DOE Joint Genome Institute"/>
            <person name="Copeland A."/>
            <person name="Lucas S."/>
            <person name="Lapidus A."/>
            <person name="Barry K."/>
            <person name="Glavina del Rio T."/>
            <person name="Dalin E."/>
            <person name="Tice H."/>
            <person name="Pitluck S."/>
            <person name="Chertkov O."/>
            <person name="Brettin T."/>
            <person name="Bruce D."/>
            <person name="Detter J.C."/>
            <person name="Han C."/>
            <person name="Schmutz J."/>
            <person name="Larimer F."/>
            <person name="Land M."/>
            <person name="Hauser L."/>
            <person name="Kyrpides N."/>
            <person name="Kim E."/>
            <person name="Zhao J.-S."/>
            <person name="Richardson P."/>
        </authorList>
    </citation>
    <scope>NUCLEOTIDE SEQUENCE [LARGE SCALE GENOMIC DNA]</scope>
    <source>
        <strain>HAW-EB3</strain>
    </source>
</reference>
<sequence length="296" mass="32172">MQDRFIKCIAELPKPLSDALVPMLNAEFAGHIDAQQLSTLITKSGLAESELLIALLPVAAALARPPISEFYVGAIAKGKSGDIYMGANMELSGEALFHSVHAEQSAISHAWLSGERQIEDVIVNFSPCGHCRQFMNELVEGQKVKIHLPEQQTQPLSHYLPYAFGPSDLNITEPLLTKQQHELSLDSSDPMIIEALDHASLSYAPYTNSYAAVVLETQDGATYCGRYAENAAFNPSMLPMQMALSTMARHNREFCEISRAVLIESAGGKISLVGATMDALHAVAAVELEHIVLDPE</sequence>